<reference key="1">
    <citation type="journal article" date="2010" name="Genome Biol. Evol.">
        <title>Continuing evolution of Burkholderia mallei through genome reduction and large-scale rearrangements.</title>
        <authorList>
            <person name="Losada L."/>
            <person name="Ronning C.M."/>
            <person name="DeShazer D."/>
            <person name="Woods D."/>
            <person name="Fedorova N."/>
            <person name="Kim H.S."/>
            <person name="Shabalina S.A."/>
            <person name="Pearson T.R."/>
            <person name="Brinkac L."/>
            <person name="Tan P."/>
            <person name="Nandi T."/>
            <person name="Crabtree J."/>
            <person name="Badger J."/>
            <person name="Beckstrom-Sternberg S."/>
            <person name="Saqib M."/>
            <person name="Schutzer S.E."/>
            <person name="Keim P."/>
            <person name="Nierman W.C."/>
        </authorList>
    </citation>
    <scope>NUCLEOTIDE SEQUENCE [LARGE SCALE GENOMIC DNA]</scope>
    <source>
        <strain>SAVP1</strain>
    </source>
</reference>
<name>PROB_BURMS</name>
<dbReference type="EC" id="2.7.2.11" evidence="1"/>
<dbReference type="EMBL" id="CP000526">
    <property type="protein sequence ID" value="ABM51617.1"/>
    <property type="molecule type" value="Genomic_DNA"/>
</dbReference>
<dbReference type="RefSeq" id="WP_004194262.1">
    <property type="nucleotide sequence ID" value="NC_008785.1"/>
</dbReference>
<dbReference type="SMR" id="A1V0P0"/>
<dbReference type="GeneID" id="93061602"/>
<dbReference type="KEGG" id="bmv:BMASAVP1_A0443"/>
<dbReference type="HOGENOM" id="CLU_025400_2_0_4"/>
<dbReference type="UniPathway" id="UPA00098">
    <property type="reaction ID" value="UER00359"/>
</dbReference>
<dbReference type="GO" id="GO:0005829">
    <property type="term" value="C:cytosol"/>
    <property type="evidence" value="ECO:0007669"/>
    <property type="project" value="TreeGrafter"/>
</dbReference>
<dbReference type="GO" id="GO:0005524">
    <property type="term" value="F:ATP binding"/>
    <property type="evidence" value="ECO:0007669"/>
    <property type="project" value="UniProtKB-KW"/>
</dbReference>
<dbReference type="GO" id="GO:0004349">
    <property type="term" value="F:glutamate 5-kinase activity"/>
    <property type="evidence" value="ECO:0007669"/>
    <property type="project" value="UniProtKB-UniRule"/>
</dbReference>
<dbReference type="GO" id="GO:0003723">
    <property type="term" value="F:RNA binding"/>
    <property type="evidence" value="ECO:0007669"/>
    <property type="project" value="InterPro"/>
</dbReference>
<dbReference type="GO" id="GO:0055129">
    <property type="term" value="P:L-proline biosynthetic process"/>
    <property type="evidence" value="ECO:0007669"/>
    <property type="project" value="UniProtKB-UniRule"/>
</dbReference>
<dbReference type="CDD" id="cd04242">
    <property type="entry name" value="AAK_G5K_ProB"/>
    <property type="match status" value="1"/>
</dbReference>
<dbReference type="CDD" id="cd21157">
    <property type="entry name" value="PUA_G5K"/>
    <property type="match status" value="1"/>
</dbReference>
<dbReference type="FunFam" id="2.30.130.10:FF:000007">
    <property type="entry name" value="Glutamate 5-kinase"/>
    <property type="match status" value="1"/>
</dbReference>
<dbReference type="FunFam" id="3.40.1160.10:FF:000018">
    <property type="entry name" value="Glutamate 5-kinase"/>
    <property type="match status" value="1"/>
</dbReference>
<dbReference type="Gene3D" id="3.40.1160.10">
    <property type="entry name" value="Acetylglutamate kinase-like"/>
    <property type="match status" value="1"/>
</dbReference>
<dbReference type="Gene3D" id="2.30.130.10">
    <property type="entry name" value="PUA domain"/>
    <property type="match status" value="1"/>
</dbReference>
<dbReference type="HAMAP" id="MF_00456">
    <property type="entry name" value="ProB"/>
    <property type="match status" value="1"/>
</dbReference>
<dbReference type="InterPro" id="IPR036393">
    <property type="entry name" value="AceGlu_kinase-like_sf"/>
</dbReference>
<dbReference type="InterPro" id="IPR001048">
    <property type="entry name" value="Asp/Glu/Uridylate_kinase"/>
</dbReference>
<dbReference type="InterPro" id="IPR041739">
    <property type="entry name" value="G5K_ProB"/>
</dbReference>
<dbReference type="InterPro" id="IPR001057">
    <property type="entry name" value="Glu/AcGlu_kinase"/>
</dbReference>
<dbReference type="InterPro" id="IPR011529">
    <property type="entry name" value="Glu_5kinase"/>
</dbReference>
<dbReference type="InterPro" id="IPR005715">
    <property type="entry name" value="Glu_5kinase/COase_Synthase"/>
</dbReference>
<dbReference type="InterPro" id="IPR019797">
    <property type="entry name" value="Glutamate_5-kinase_CS"/>
</dbReference>
<dbReference type="InterPro" id="IPR002478">
    <property type="entry name" value="PUA"/>
</dbReference>
<dbReference type="InterPro" id="IPR015947">
    <property type="entry name" value="PUA-like_sf"/>
</dbReference>
<dbReference type="InterPro" id="IPR036974">
    <property type="entry name" value="PUA_sf"/>
</dbReference>
<dbReference type="NCBIfam" id="TIGR01027">
    <property type="entry name" value="proB"/>
    <property type="match status" value="1"/>
</dbReference>
<dbReference type="PANTHER" id="PTHR43654">
    <property type="entry name" value="GLUTAMATE 5-KINASE"/>
    <property type="match status" value="1"/>
</dbReference>
<dbReference type="PANTHER" id="PTHR43654:SF1">
    <property type="entry name" value="ISOPENTENYL PHOSPHATE KINASE"/>
    <property type="match status" value="1"/>
</dbReference>
<dbReference type="Pfam" id="PF00696">
    <property type="entry name" value="AA_kinase"/>
    <property type="match status" value="1"/>
</dbReference>
<dbReference type="Pfam" id="PF01472">
    <property type="entry name" value="PUA"/>
    <property type="match status" value="1"/>
</dbReference>
<dbReference type="PIRSF" id="PIRSF000729">
    <property type="entry name" value="GK"/>
    <property type="match status" value="1"/>
</dbReference>
<dbReference type="PRINTS" id="PR00474">
    <property type="entry name" value="GLU5KINASE"/>
</dbReference>
<dbReference type="SMART" id="SM00359">
    <property type="entry name" value="PUA"/>
    <property type="match status" value="1"/>
</dbReference>
<dbReference type="SUPFAM" id="SSF53633">
    <property type="entry name" value="Carbamate kinase-like"/>
    <property type="match status" value="1"/>
</dbReference>
<dbReference type="SUPFAM" id="SSF88697">
    <property type="entry name" value="PUA domain-like"/>
    <property type="match status" value="1"/>
</dbReference>
<dbReference type="PROSITE" id="PS00902">
    <property type="entry name" value="GLUTAMATE_5_KINASE"/>
    <property type="match status" value="1"/>
</dbReference>
<dbReference type="PROSITE" id="PS50890">
    <property type="entry name" value="PUA"/>
    <property type="match status" value="1"/>
</dbReference>
<sequence>MRSIIADSKRLVVKVGSSLVTNDGRGLDHDAIGRWAAQIAALRGAGKEVVLVSSGAIAEGMQRLGWSKRPREIDELQAAAAVGQMGLAQVYESRFAEHGIRTAQILLTHADLADRERYLNARSTLLTLLRLGVVPIINENDTVVTDEIKFGDNDTLGALVANLIEGDTLVILTDQPGLFTADPRKDPGATLVAEASAGAPELEAMAGGAGSSIGRGGMLTKILAAKRAAHSGANTVIASGRERDVLVRLAAGEAIGTQLIARTARMAARKQWMADHLQVRGHVVIDAGAVDKLTAGGKSLLPIGVVAVQGVFARGEVIACVDDTGREVARGITNYSSAETKLIQRKPSGEIETVLGYMLEPELIHRDNLVLV</sequence>
<organism>
    <name type="scientific">Burkholderia mallei (strain SAVP1)</name>
    <dbReference type="NCBI Taxonomy" id="320388"/>
    <lineage>
        <taxon>Bacteria</taxon>
        <taxon>Pseudomonadati</taxon>
        <taxon>Pseudomonadota</taxon>
        <taxon>Betaproteobacteria</taxon>
        <taxon>Burkholderiales</taxon>
        <taxon>Burkholderiaceae</taxon>
        <taxon>Burkholderia</taxon>
        <taxon>pseudomallei group</taxon>
    </lineage>
</organism>
<evidence type="ECO:0000255" key="1">
    <source>
        <dbReference type="HAMAP-Rule" id="MF_00456"/>
    </source>
</evidence>
<proteinExistence type="inferred from homology"/>
<gene>
    <name evidence="1" type="primary">proB</name>
    <name type="ordered locus">BMASAVP1_A0443</name>
</gene>
<protein>
    <recommendedName>
        <fullName evidence="1">Glutamate 5-kinase</fullName>
        <ecNumber evidence="1">2.7.2.11</ecNumber>
    </recommendedName>
    <alternativeName>
        <fullName evidence="1">Gamma-glutamyl kinase</fullName>
        <shortName evidence="1">GK</shortName>
    </alternativeName>
</protein>
<comment type="function">
    <text evidence="1">Catalyzes the transfer of a phosphate group to glutamate to form L-glutamate 5-phosphate.</text>
</comment>
<comment type="catalytic activity">
    <reaction evidence="1">
        <text>L-glutamate + ATP = L-glutamyl 5-phosphate + ADP</text>
        <dbReference type="Rhea" id="RHEA:14877"/>
        <dbReference type="ChEBI" id="CHEBI:29985"/>
        <dbReference type="ChEBI" id="CHEBI:30616"/>
        <dbReference type="ChEBI" id="CHEBI:58274"/>
        <dbReference type="ChEBI" id="CHEBI:456216"/>
        <dbReference type="EC" id="2.7.2.11"/>
    </reaction>
</comment>
<comment type="pathway">
    <text evidence="1">Amino-acid biosynthesis; L-proline biosynthesis; L-glutamate 5-semialdehyde from L-glutamate: step 1/2.</text>
</comment>
<comment type="subcellular location">
    <subcellularLocation>
        <location evidence="1">Cytoplasm</location>
    </subcellularLocation>
</comment>
<comment type="similarity">
    <text evidence="1">Belongs to the glutamate 5-kinase family.</text>
</comment>
<accession>A1V0P0</accession>
<keyword id="KW-0028">Amino-acid biosynthesis</keyword>
<keyword id="KW-0067">ATP-binding</keyword>
<keyword id="KW-0963">Cytoplasm</keyword>
<keyword id="KW-0418">Kinase</keyword>
<keyword id="KW-0547">Nucleotide-binding</keyword>
<keyword id="KW-0641">Proline biosynthesis</keyword>
<keyword id="KW-0808">Transferase</keyword>
<feature type="chain" id="PRO_1000081045" description="Glutamate 5-kinase">
    <location>
        <begin position="1"/>
        <end position="372"/>
    </location>
</feature>
<feature type="domain" description="PUA" evidence="1">
    <location>
        <begin position="280"/>
        <end position="358"/>
    </location>
</feature>
<feature type="binding site" evidence="1">
    <location>
        <position position="14"/>
    </location>
    <ligand>
        <name>ATP</name>
        <dbReference type="ChEBI" id="CHEBI:30616"/>
    </ligand>
</feature>
<feature type="binding site" evidence="1">
    <location>
        <position position="54"/>
    </location>
    <ligand>
        <name>substrate</name>
    </ligand>
</feature>
<feature type="binding site" evidence="1">
    <location>
        <position position="141"/>
    </location>
    <ligand>
        <name>substrate</name>
    </ligand>
</feature>
<feature type="binding site" evidence="1">
    <location>
        <position position="153"/>
    </location>
    <ligand>
        <name>substrate</name>
    </ligand>
</feature>
<feature type="binding site" evidence="1">
    <location>
        <begin position="173"/>
        <end position="174"/>
    </location>
    <ligand>
        <name>ATP</name>
        <dbReference type="ChEBI" id="CHEBI:30616"/>
    </ligand>
</feature>